<organism>
    <name type="scientific">Variovorax paradoxus (strain S110)</name>
    <dbReference type="NCBI Taxonomy" id="543728"/>
    <lineage>
        <taxon>Bacteria</taxon>
        <taxon>Pseudomonadati</taxon>
        <taxon>Pseudomonadota</taxon>
        <taxon>Betaproteobacteria</taxon>
        <taxon>Burkholderiales</taxon>
        <taxon>Comamonadaceae</taxon>
        <taxon>Variovorax</taxon>
    </lineage>
</organism>
<proteinExistence type="inferred from homology"/>
<accession>C5CPD4</accession>
<reference key="1">
    <citation type="journal article" date="2011" name="J. Bacteriol.">
        <title>Complete genome sequence of the metabolically versatile plant growth-promoting endophyte, Variovorax paradoxus S110.</title>
        <authorList>
            <person name="Han J.I."/>
            <person name="Choi H.K."/>
            <person name="Lee S.W."/>
            <person name="Orwin P.M."/>
            <person name="Kim J."/>
            <person name="Laroe S.L."/>
            <person name="Kim T.G."/>
            <person name="O'Neil J."/>
            <person name="Leadbetter J.R."/>
            <person name="Lee S.Y."/>
            <person name="Hur C.G."/>
            <person name="Spain J.C."/>
            <person name="Ovchinnikova G."/>
            <person name="Goodwin L."/>
            <person name="Han C."/>
        </authorList>
    </citation>
    <scope>NUCLEOTIDE SEQUENCE [LARGE SCALE GENOMIC DNA]</scope>
    <source>
        <strain>S110</strain>
    </source>
</reference>
<protein>
    <recommendedName>
        <fullName evidence="1">Potassium-transporting ATPase potassium-binding subunit</fullName>
    </recommendedName>
    <alternativeName>
        <fullName evidence="1">ATP phosphohydrolase [potassium-transporting] A chain</fullName>
    </alternativeName>
    <alternativeName>
        <fullName evidence="1">Potassium-binding and translocating subunit A</fullName>
    </alternativeName>
    <alternativeName>
        <fullName evidence="1">Potassium-translocating ATPase A chain</fullName>
    </alternativeName>
</protein>
<keyword id="KW-0997">Cell inner membrane</keyword>
<keyword id="KW-1003">Cell membrane</keyword>
<keyword id="KW-0406">Ion transport</keyword>
<keyword id="KW-0472">Membrane</keyword>
<keyword id="KW-0630">Potassium</keyword>
<keyword id="KW-0633">Potassium transport</keyword>
<keyword id="KW-0812">Transmembrane</keyword>
<keyword id="KW-1133">Transmembrane helix</keyword>
<keyword id="KW-0813">Transport</keyword>
<sequence length="575" mass="60039">MTSSAWGLLALFLAALLVLAWPVGKFLAALCNERVPRWMQRVEAPLYKIAGTRPEQSMHWLRYAIALLAFNAVGAVFVYALQRLQGWLPLNPAGMGAVSPDSAFNTAVSFVSNTNWQGYAGESAMSYLTQMLGLAVQNFFSAATGIAVAFALIRGFARRGDGKARGLVGNFWADLTRITLWVLVPLSFVLAVFFVSQGVIQNFDAYKTVQTVEATAAGGQTLAMGPVASQEAIKMLGTNGGGFFNANSAHPYENPSALANLLQMIAVFLIPAALCFAFGRVAGDLRQGWAVLAAMTVMFVAAVMVVIPAEQDGNPLFGALGVDQLHGALQSGGNMEGKEVRFGIDASALFAAVTTAASCGAVIAMHDSFTPLGGMVPMVLMQLGEVVFGGVGSGLYGMLIFAMLAVFIAGLMIGRTPEYLGKKIEVREMKLISIAILVTPVLVLAGTAVAVLAGAGKAGIANPGAHGFSEILYALSSAANNNGSAFAGLSANTPFYNGLLGLAMWLGRFAVIVPVLAIAGSLAAKQRLPVTGGTLPTHGPLFVSLLIGTVLLVGLLNYVPALALGPVVEHLVLWK</sequence>
<gene>
    <name evidence="1" type="primary">kdpA</name>
    <name type="ordered locus">Vapar_4995</name>
</gene>
<name>KDPA_VARPS</name>
<feature type="chain" id="PRO_1000204791" description="Potassium-transporting ATPase potassium-binding subunit">
    <location>
        <begin position="1"/>
        <end position="575"/>
    </location>
</feature>
<feature type="transmembrane region" description="Helical" evidence="1">
    <location>
        <begin position="4"/>
        <end position="24"/>
    </location>
</feature>
<feature type="transmembrane region" description="Helical" evidence="1">
    <location>
        <begin position="61"/>
        <end position="81"/>
    </location>
</feature>
<feature type="transmembrane region" description="Helical" evidence="1">
    <location>
        <begin position="133"/>
        <end position="153"/>
    </location>
</feature>
<feature type="transmembrane region" description="Helical" evidence="1">
    <location>
        <begin position="180"/>
        <end position="200"/>
    </location>
</feature>
<feature type="transmembrane region" description="Helical" evidence="1">
    <location>
        <begin position="258"/>
        <end position="278"/>
    </location>
</feature>
<feature type="transmembrane region" description="Helical" evidence="1">
    <location>
        <begin position="289"/>
        <end position="309"/>
    </location>
</feature>
<feature type="transmembrane region" description="Helical" evidence="1">
    <location>
        <begin position="344"/>
        <end position="364"/>
    </location>
</feature>
<feature type="transmembrane region" description="Helical" evidence="1">
    <location>
        <begin position="372"/>
        <end position="392"/>
    </location>
</feature>
<feature type="transmembrane region" description="Helical" evidence="1">
    <location>
        <begin position="394"/>
        <end position="414"/>
    </location>
</feature>
<feature type="transmembrane region" description="Helical" evidence="1">
    <location>
        <begin position="431"/>
        <end position="451"/>
    </location>
</feature>
<feature type="transmembrane region" description="Helical" evidence="1">
    <location>
        <begin position="499"/>
        <end position="519"/>
    </location>
</feature>
<feature type="transmembrane region" description="Helical" evidence="1">
    <location>
        <begin position="545"/>
        <end position="565"/>
    </location>
</feature>
<comment type="function">
    <text evidence="1">Part of the high-affinity ATP-driven potassium transport (or Kdp) system, which catalyzes the hydrolysis of ATP coupled with the electrogenic transport of potassium into the cytoplasm. This subunit binds the periplasmic potassium ions and delivers the ions to the membrane domain of KdpB through an intramembrane tunnel.</text>
</comment>
<comment type="subunit">
    <text evidence="1">The system is composed of three essential subunits: KdpA, KdpB and KdpC.</text>
</comment>
<comment type="subcellular location">
    <subcellularLocation>
        <location evidence="1">Cell inner membrane</location>
        <topology evidence="1">Multi-pass membrane protein</topology>
    </subcellularLocation>
</comment>
<comment type="similarity">
    <text evidence="1">Belongs to the KdpA family.</text>
</comment>
<dbReference type="EMBL" id="CP001635">
    <property type="protein sequence ID" value="ACS21598.1"/>
    <property type="molecule type" value="Genomic_DNA"/>
</dbReference>
<dbReference type="SMR" id="C5CPD4"/>
<dbReference type="STRING" id="543728.Vapar_4995"/>
<dbReference type="KEGG" id="vap:Vapar_4995"/>
<dbReference type="eggNOG" id="COG2060">
    <property type="taxonomic scope" value="Bacteria"/>
</dbReference>
<dbReference type="HOGENOM" id="CLU_018614_3_0_4"/>
<dbReference type="OrthoDB" id="9763796at2"/>
<dbReference type="GO" id="GO:0005886">
    <property type="term" value="C:plasma membrane"/>
    <property type="evidence" value="ECO:0007669"/>
    <property type="project" value="UniProtKB-SubCell"/>
</dbReference>
<dbReference type="GO" id="GO:0008556">
    <property type="term" value="F:P-type potassium transmembrane transporter activity"/>
    <property type="evidence" value="ECO:0007669"/>
    <property type="project" value="InterPro"/>
</dbReference>
<dbReference type="GO" id="GO:0030955">
    <property type="term" value="F:potassium ion binding"/>
    <property type="evidence" value="ECO:0007669"/>
    <property type="project" value="UniProtKB-UniRule"/>
</dbReference>
<dbReference type="HAMAP" id="MF_00275">
    <property type="entry name" value="KdpA"/>
    <property type="match status" value="1"/>
</dbReference>
<dbReference type="InterPro" id="IPR004623">
    <property type="entry name" value="KdpA"/>
</dbReference>
<dbReference type="NCBIfam" id="TIGR00680">
    <property type="entry name" value="kdpA"/>
    <property type="match status" value="1"/>
</dbReference>
<dbReference type="PANTHER" id="PTHR30607">
    <property type="entry name" value="POTASSIUM-TRANSPORTING ATPASE A CHAIN"/>
    <property type="match status" value="1"/>
</dbReference>
<dbReference type="PANTHER" id="PTHR30607:SF2">
    <property type="entry name" value="POTASSIUM-TRANSPORTING ATPASE POTASSIUM-BINDING SUBUNIT"/>
    <property type="match status" value="1"/>
</dbReference>
<dbReference type="Pfam" id="PF03814">
    <property type="entry name" value="KdpA"/>
    <property type="match status" value="1"/>
</dbReference>
<dbReference type="PIRSF" id="PIRSF001294">
    <property type="entry name" value="K_ATPaseA"/>
    <property type="match status" value="1"/>
</dbReference>
<evidence type="ECO:0000255" key="1">
    <source>
        <dbReference type="HAMAP-Rule" id="MF_00275"/>
    </source>
</evidence>